<feature type="chain" id="PRO_0000065127" description="Uncharacterized protein C03B8.3">
    <location>
        <begin position="1"/>
        <end position="247"/>
    </location>
</feature>
<feature type="transmembrane region" description="Helical" evidence="1">
    <location>
        <begin position="108"/>
        <end position="128"/>
    </location>
</feature>
<feature type="transmembrane region" description="Helical" evidence="1">
    <location>
        <begin position="136"/>
        <end position="156"/>
    </location>
</feature>
<feature type="transmembrane region" description="Helical" evidence="1">
    <location>
        <begin position="194"/>
        <end position="214"/>
    </location>
</feature>
<dbReference type="EMBL" id="FO080307">
    <property type="protein sequence ID" value="CCD62761.1"/>
    <property type="molecule type" value="Genomic_DNA"/>
</dbReference>
<dbReference type="PIR" id="T15391">
    <property type="entry name" value="T15391"/>
</dbReference>
<dbReference type="RefSeq" id="NP_498679.2">
    <property type="nucleotide sequence ID" value="NM_066278.5"/>
</dbReference>
<dbReference type="BioGRID" id="47016">
    <property type="interactions" value="1"/>
</dbReference>
<dbReference type="FunCoup" id="Q11106">
    <property type="interactions" value="35"/>
</dbReference>
<dbReference type="STRING" id="6239.C03B8.3.1"/>
<dbReference type="PaxDb" id="6239-C03B8.3"/>
<dbReference type="EnsemblMetazoa" id="C03B8.3.1">
    <property type="protein sequence ID" value="C03B8.3.1"/>
    <property type="gene ID" value="WBGene00015386"/>
</dbReference>
<dbReference type="GeneID" id="182155"/>
<dbReference type="KEGG" id="cel:CELE_C03B8.3"/>
<dbReference type="UCSC" id="C03B8.3">
    <property type="organism name" value="c. elegans"/>
</dbReference>
<dbReference type="AGR" id="WB:WBGene00015386"/>
<dbReference type="CTD" id="182155"/>
<dbReference type="WormBase" id="C03B8.3">
    <property type="protein sequence ID" value="CE45119"/>
    <property type="gene ID" value="WBGene00015386"/>
</dbReference>
<dbReference type="eggNOG" id="KOG4619">
    <property type="taxonomic scope" value="Eukaryota"/>
</dbReference>
<dbReference type="GeneTree" id="ENSGT00390000017802"/>
<dbReference type="HOGENOM" id="CLU_1125399_0_0_1"/>
<dbReference type="InParanoid" id="Q11106"/>
<dbReference type="OMA" id="CCWMGTH"/>
<dbReference type="OrthoDB" id="430821at2759"/>
<dbReference type="PhylomeDB" id="Q11106"/>
<dbReference type="PRO" id="PR:Q11106"/>
<dbReference type="Proteomes" id="UP000001940">
    <property type="component" value="Chromosome III"/>
</dbReference>
<dbReference type="Bgee" id="WBGene00015386">
    <property type="expression patterns" value="Expressed in germ line (C elegans) and 4 other cell types or tissues"/>
</dbReference>
<dbReference type="GO" id="GO:0016020">
    <property type="term" value="C:membrane"/>
    <property type="evidence" value="ECO:0007669"/>
    <property type="project" value="UniProtKB-SubCell"/>
</dbReference>
<dbReference type="GO" id="GO:0005739">
    <property type="term" value="C:mitochondrion"/>
    <property type="evidence" value="ECO:0000318"/>
    <property type="project" value="GO_Central"/>
</dbReference>
<dbReference type="InterPro" id="IPR019537">
    <property type="entry name" value="TMEM65"/>
</dbReference>
<dbReference type="PANTHER" id="PTHR21706">
    <property type="entry name" value="TRANSMEMBRANE PROTEIN 65"/>
    <property type="match status" value="1"/>
</dbReference>
<dbReference type="PANTHER" id="PTHR21706:SF15">
    <property type="entry name" value="TRANSMEMBRANE PROTEIN 65"/>
    <property type="match status" value="1"/>
</dbReference>
<dbReference type="Pfam" id="PF10507">
    <property type="entry name" value="TMEM65"/>
    <property type="match status" value="1"/>
</dbReference>
<organism>
    <name type="scientific">Caenorhabditis elegans</name>
    <dbReference type="NCBI Taxonomy" id="6239"/>
    <lineage>
        <taxon>Eukaryota</taxon>
        <taxon>Metazoa</taxon>
        <taxon>Ecdysozoa</taxon>
        <taxon>Nematoda</taxon>
        <taxon>Chromadorea</taxon>
        <taxon>Rhabditida</taxon>
        <taxon>Rhabditina</taxon>
        <taxon>Rhabditomorpha</taxon>
        <taxon>Rhabditoidea</taxon>
        <taxon>Rhabditidae</taxon>
        <taxon>Peloderinae</taxon>
        <taxon>Caenorhabditis</taxon>
    </lineage>
</organism>
<evidence type="ECO:0000255" key="1"/>
<evidence type="ECO:0000305" key="2"/>
<reference key="1">
    <citation type="journal article" date="1998" name="Science">
        <title>Genome sequence of the nematode C. elegans: a platform for investigating biology.</title>
        <authorList>
            <consortium name="The C. elegans sequencing consortium"/>
        </authorList>
    </citation>
    <scope>NUCLEOTIDE SEQUENCE [LARGE SCALE GENOMIC DNA]</scope>
    <source>
        <strain>Bristol N2</strain>
    </source>
</reference>
<proteinExistence type="predicted"/>
<sequence length="247" mass="27854">MDRSIAKMLSNQQIRNFSRGVGHLRRRAAKNNVIKVRPEELRPFFNQYSVLPNGIQNDADAKLFSKELQPGERKLLFDALRKITADQYNDHKKVVEVTIDHEDLVKVWYINFIPMFVYGCLDEAFLIIGGESINNIFSVYNGMSMLASAAVANIICNLFLQLPADRINDVLGFKKPVLSVDQMNIPEYQYAAFGAKLSGLWMGLTLGMLPLFFIDDNLDNRASDNGDLLVSVANTNGDEYCELFCGD</sequence>
<name>YPB3_CAEEL</name>
<keyword id="KW-0472">Membrane</keyword>
<keyword id="KW-1185">Reference proteome</keyword>
<keyword id="KW-0812">Transmembrane</keyword>
<keyword id="KW-1133">Transmembrane helix</keyword>
<comment type="subcellular location">
    <subcellularLocation>
        <location evidence="2">Membrane</location>
        <topology evidence="2">Multi-pass membrane protein</topology>
    </subcellularLocation>
</comment>
<accession>Q11106</accession>
<accession>Q11104</accession>
<gene>
    <name type="ORF">C03B8.3</name>
</gene>
<protein>
    <recommendedName>
        <fullName>Uncharacterized protein C03B8.3</fullName>
    </recommendedName>
</protein>